<reference key="1">
    <citation type="journal article" date="2006" name="Appl. Environ. Microbiol.">
        <title>Genome sequence of the chemolithoautotrophic nitrite-oxidizing bacterium Nitrobacter winogradskyi Nb-255.</title>
        <authorList>
            <person name="Starkenburg S.R."/>
            <person name="Chain P.S.G."/>
            <person name="Sayavedra-Soto L.A."/>
            <person name="Hauser L."/>
            <person name="Land M.L."/>
            <person name="Larimer F.W."/>
            <person name="Malfatti S.A."/>
            <person name="Klotz M.G."/>
            <person name="Bottomley P.J."/>
            <person name="Arp D.J."/>
            <person name="Hickey W.J."/>
        </authorList>
    </citation>
    <scope>NUCLEOTIDE SEQUENCE [LARGE SCALE GENOMIC DNA]</scope>
    <source>
        <strain>ATCC 25391 / DSM 10237 / CIP 104748 / NCIMB 11846 / Nb-255</strain>
    </source>
</reference>
<name>LEXA_NITWN</name>
<keyword id="KW-0068">Autocatalytic cleavage</keyword>
<keyword id="KW-0227">DNA damage</keyword>
<keyword id="KW-0234">DNA repair</keyword>
<keyword id="KW-0235">DNA replication</keyword>
<keyword id="KW-0238">DNA-binding</keyword>
<keyword id="KW-0378">Hydrolase</keyword>
<keyword id="KW-1185">Reference proteome</keyword>
<keyword id="KW-0678">Repressor</keyword>
<keyword id="KW-0742">SOS response</keyword>
<keyword id="KW-0804">Transcription</keyword>
<keyword id="KW-0805">Transcription regulation</keyword>
<protein>
    <recommendedName>
        <fullName evidence="1">LexA repressor</fullName>
        <ecNumber evidence="1">3.4.21.88</ecNumber>
    </recommendedName>
</protein>
<sequence length="233" mass="25403">MLTRKQYELLRFINERLKESGVPPSFDEMKDALDLRSKSGIHRLITALEERGFIRRLPNRARAIEVIKLPELAASGGGRRGFTPSVIEGNLGKVRRGGGGGADEAERPVAVPVMGRIAAGTPIEALQTCSHTISLPPDMLGAGEHYALEVRGDSMVDAGILDGDMALIQRNPTADTGDIVVALIDDEEATLKRFRRRGASIALEPANAAYEVRILPPNRVQIQGRLVGIYRKY</sequence>
<dbReference type="EC" id="3.4.21.88" evidence="1"/>
<dbReference type="EMBL" id="CP000115">
    <property type="protein sequence ID" value="ABA05101.1"/>
    <property type="molecule type" value="Genomic_DNA"/>
</dbReference>
<dbReference type="RefSeq" id="WP_011315097.1">
    <property type="nucleotide sequence ID" value="NC_007406.1"/>
</dbReference>
<dbReference type="SMR" id="Q3SRJ0"/>
<dbReference type="STRING" id="323098.Nwi_1841"/>
<dbReference type="MEROPS" id="S24.001"/>
<dbReference type="KEGG" id="nwi:Nwi_1841"/>
<dbReference type="eggNOG" id="COG1974">
    <property type="taxonomic scope" value="Bacteria"/>
</dbReference>
<dbReference type="HOGENOM" id="CLU_066192_45_2_5"/>
<dbReference type="OrthoDB" id="9802364at2"/>
<dbReference type="Proteomes" id="UP000002531">
    <property type="component" value="Chromosome"/>
</dbReference>
<dbReference type="GO" id="GO:0003677">
    <property type="term" value="F:DNA binding"/>
    <property type="evidence" value="ECO:0007669"/>
    <property type="project" value="UniProtKB-UniRule"/>
</dbReference>
<dbReference type="GO" id="GO:0004252">
    <property type="term" value="F:serine-type endopeptidase activity"/>
    <property type="evidence" value="ECO:0007669"/>
    <property type="project" value="UniProtKB-UniRule"/>
</dbReference>
<dbReference type="GO" id="GO:0006281">
    <property type="term" value="P:DNA repair"/>
    <property type="evidence" value="ECO:0007669"/>
    <property type="project" value="UniProtKB-UniRule"/>
</dbReference>
<dbReference type="GO" id="GO:0006260">
    <property type="term" value="P:DNA replication"/>
    <property type="evidence" value="ECO:0007669"/>
    <property type="project" value="UniProtKB-UniRule"/>
</dbReference>
<dbReference type="GO" id="GO:0045892">
    <property type="term" value="P:negative regulation of DNA-templated transcription"/>
    <property type="evidence" value="ECO:0007669"/>
    <property type="project" value="UniProtKB-UniRule"/>
</dbReference>
<dbReference type="GO" id="GO:0006508">
    <property type="term" value="P:proteolysis"/>
    <property type="evidence" value="ECO:0007669"/>
    <property type="project" value="InterPro"/>
</dbReference>
<dbReference type="GO" id="GO:0009432">
    <property type="term" value="P:SOS response"/>
    <property type="evidence" value="ECO:0007669"/>
    <property type="project" value="UniProtKB-UniRule"/>
</dbReference>
<dbReference type="CDD" id="cd06529">
    <property type="entry name" value="S24_LexA-like"/>
    <property type="match status" value="1"/>
</dbReference>
<dbReference type="FunFam" id="1.10.10.10:FF:000102">
    <property type="entry name" value="LexA repressor"/>
    <property type="match status" value="1"/>
</dbReference>
<dbReference type="FunFam" id="2.10.109.10:FF:000001">
    <property type="entry name" value="LexA repressor"/>
    <property type="match status" value="1"/>
</dbReference>
<dbReference type="Gene3D" id="2.10.109.10">
    <property type="entry name" value="Umud Fragment, subunit A"/>
    <property type="match status" value="1"/>
</dbReference>
<dbReference type="Gene3D" id="1.10.10.10">
    <property type="entry name" value="Winged helix-like DNA-binding domain superfamily/Winged helix DNA-binding domain"/>
    <property type="match status" value="1"/>
</dbReference>
<dbReference type="HAMAP" id="MF_00015">
    <property type="entry name" value="LexA"/>
    <property type="match status" value="1"/>
</dbReference>
<dbReference type="InterPro" id="IPR006200">
    <property type="entry name" value="LexA"/>
</dbReference>
<dbReference type="InterPro" id="IPR039418">
    <property type="entry name" value="LexA-like"/>
</dbReference>
<dbReference type="InterPro" id="IPR036286">
    <property type="entry name" value="LexA/Signal_pep-like_sf"/>
</dbReference>
<dbReference type="InterPro" id="IPR006199">
    <property type="entry name" value="LexA_DNA-bd_dom"/>
</dbReference>
<dbReference type="InterPro" id="IPR050077">
    <property type="entry name" value="LexA_repressor"/>
</dbReference>
<dbReference type="InterPro" id="IPR006197">
    <property type="entry name" value="Peptidase_S24_LexA"/>
</dbReference>
<dbReference type="InterPro" id="IPR015927">
    <property type="entry name" value="Peptidase_S24_S26A/B/C"/>
</dbReference>
<dbReference type="InterPro" id="IPR036388">
    <property type="entry name" value="WH-like_DNA-bd_sf"/>
</dbReference>
<dbReference type="InterPro" id="IPR036390">
    <property type="entry name" value="WH_DNA-bd_sf"/>
</dbReference>
<dbReference type="NCBIfam" id="TIGR00498">
    <property type="entry name" value="lexA"/>
    <property type="match status" value="1"/>
</dbReference>
<dbReference type="PANTHER" id="PTHR33516">
    <property type="entry name" value="LEXA REPRESSOR"/>
    <property type="match status" value="1"/>
</dbReference>
<dbReference type="PANTHER" id="PTHR33516:SF2">
    <property type="entry name" value="LEXA REPRESSOR-RELATED"/>
    <property type="match status" value="1"/>
</dbReference>
<dbReference type="Pfam" id="PF01726">
    <property type="entry name" value="LexA_DNA_bind"/>
    <property type="match status" value="1"/>
</dbReference>
<dbReference type="Pfam" id="PF00717">
    <property type="entry name" value="Peptidase_S24"/>
    <property type="match status" value="1"/>
</dbReference>
<dbReference type="PRINTS" id="PR00726">
    <property type="entry name" value="LEXASERPTASE"/>
</dbReference>
<dbReference type="SUPFAM" id="SSF51306">
    <property type="entry name" value="LexA/Signal peptidase"/>
    <property type="match status" value="1"/>
</dbReference>
<dbReference type="SUPFAM" id="SSF46785">
    <property type="entry name" value="Winged helix' DNA-binding domain"/>
    <property type="match status" value="1"/>
</dbReference>
<gene>
    <name evidence="1" type="primary">lexA</name>
    <name type="ordered locus">Nwi_1841</name>
</gene>
<accession>Q3SRJ0</accession>
<comment type="function">
    <text evidence="1">Represses a number of genes involved in the response to DNA damage (SOS response), including recA and lexA. In the presence of single-stranded DNA, RecA interacts with LexA causing an autocatalytic cleavage which disrupts the DNA-binding part of LexA, leading to derepression of the SOS regulon and eventually DNA repair.</text>
</comment>
<comment type="catalytic activity">
    <reaction evidence="1">
        <text>Hydrolysis of Ala-|-Gly bond in repressor LexA.</text>
        <dbReference type="EC" id="3.4.21.88"/>
    </reaction>
</comment>
<comment type="subunit">
    <text evidence="1">Homodimer.</text>
</comment>
<comment type="similarity">
    <text evidence="1">Belongs to the peptidase S24 family.</text>
</comment>
<feature type="chain" id="PRO_1000001309" description="LexA repressor">
    <location>
        <begin position="1"/>
        <end position="233"/>
    </location>
</feature>
<feature type="DNA-binding region" description="H-T-H motif" evidence="1">
    <location>
        <begin position="26"/>
        <end position="46"/>
    </location>
</feature>
<feature type="active site" description="For autocatalytic cleavage activity" evidence="1">
    <location>
        <position position="154"/>
    </location>
</feature>
<feature type="active site" description="For autocatalytic cleavage activity" evidence="1">
    <location>
        <position position="192"/>
    </location>
</feature>
<feature type="site" description="Cleavage; by autolysis" evidence="1">
    <location>
        <begin position="119"/>
        <end position="120"/>
    </location>
</feature>
<evidence type="ECO:0000255" key="1">
    <source>
        <dbReference type="HAMAP-Rule" id="MF_00015"/>
    </source>
</evidence>
<organism>
    <name type="scientific">Nitrobacter winogradskyi (strain ATCC 25391 / DSM 10237 / CIP 104748 / NCIMB 11846 / Nb-255)</name>
    <dbReference type="NCBI Taxonomy" id="323098"/>
    <lineage>
        <taxon>Bacteria</taxon>
        <taxon>Pseudomonadati</taxon>
        <taxon>Pseudomonadota</taxon>
        <taxon>Alphaproteobacteria</taxon>
        <taxon>Hyphomicrobiales</taxon>
        <taxon>Nitrobacteraceae</taxon>
        <taxon>Nitrobacter</taxon>
    </lineage>
</organism>
<proteinExistence type="inferred from homology"/>